<sequence length="354" mass="40613">MGPVSVLPSPQSLSTWEGDLAKMTHLQAGLSPDTIEKARLELNENPDILHQDIQQVRDMIITRPDIGFLRTDDAFILRFLRARKFHQADAFRLLAQYFQYRQLNLDMFKNFKADDPGIKRALIDGFPGVLENRDHYGRKILLLFAANWDQSRNSFTDILRAILLSLEVLIEDPELQINGFILIIDWSNFSFKQASKLTPSILKLAIEGLQDSFPARFGGVHFVNQPWYIHALYTLIKPFLKDKTRKRIFLHGNNLNSLHQLIHPEFLPSEFGGTLPPYDMGTWARTLLGPDYSDENDYTHTSYNAMHVKHTCSNLERECSPKPMKRSQSVVEAGTLKHEEKGENENTQPLLALD</sequence>
<protein>
    <recommendedName>
        <fullName>Clavesin-1</fullName>
    </recommendedName>
    <alternativeName>
        <fullName>Retinaldehyde-binding protein 1-like 1</fullName>
    </alternativeName>
</protein>
<gene>
    <name type="primary">Clvs1</name>
    <name type="synonym">Rlbp1l1</name>
</gene>
<reference key="1">
    <citation type="journal article" date="2005" name="Science">
        <title>The transcriptional landscape of the mammalian genome.</title>
        <authorList>
            <person name="Carninci P."/>
            <person name="Kasukawa T."/>
            <person name="Katayama S."/>
            <person name="Gough J."/>
            <person name="Frith M.C."/>
            <person name="Maeda N."/>
            <person name="Oyama R."/>
            <person name="Ravasi T."/>
            <person name="Lenhard B."/>
            <person name="Wells C."/>
            <person name="Kodzius R."/>
            <person name="Shimokawa K."/>
            <person name="Bajic V.B."/>
            <person name="Brenner S.E."/>
            <person name="Batalov S."/>
            <person name="Forrest A.R."/>
            <person name="Zavolan M."/>
            <person name="Davis M.J."/>
            <person name="Wilming L.G."/>
            <person name="Aidinis V."/>
            <person name="Allen J.E."/>
            <person name="Ambesi-Impiombato A."/>
            <person name="Apweiler R."/>
            <person name="Aturaliya R.N."/>
            <person name="Bailey T.L."/>
            <person name="Bansal M."/>
            <person name="Baxter L."/>
            <person name="Beisel K.W."/>
            <person name="Bersano T."/>
            <person name="Bono H."/>
            <person name="Chalk A.M."/>
            <person name="Chiu K.P."/>
            <person name="Choudhary V."/>
            <person name="Christoffels A."/>
            <person name="Clutterbuck D.R."/>
            <person name="Crowe M.L."/>
            <person name="Dalla E."/>
            <person name="Dalrymple B.P."/>
            <person name="de Bono B."/>
            <person name="Della Gatta G."/>
            <person name="di Bernardo D."/>
            <person name="Down T."/>
            <person name="Engstrom P."/>
            <person name="Fagiolini M."/>
            <person name="Faulkner G."/>
            <person name="Fletcher C.F."/>
            <person name="Fukushima T."/>
            <person name="Furuno M."/>
            <person name="Futaki S."/>
            <person name="Gariboldi M."/>
            <person name="Georgii-Hemming P."/>
            <person name="Gingeras T.R."/>
            <person name="Gojobori T."/>
            <person name="Green R.E."/>
            <person name="Gustincich S."/>
            <person name="Harbers M."/>
            <person name="Hayashi Y."/>
            <person name="Hensch T.K."/>
            <person name="Hirokawa N."/>
            <person name="Hill D."/>
            <person name="Huminiecki L."/>
            <person name="Iacono M."/>
            <person name="Ikeo K."/>
            <person name="Iwama A."/>
            <person name="Ishikawa T."/>
            <person name="Jakt M."/>
            <person name="Kanapin A."/>
            <person name="Katoh M."/>
            <person name="Kawasawa Y."/>
            <person name="Kelso J."/>
            <person name="Kitamura H."/>
            <person name="Kitano H."/>
            <person name="Kollias G."/>
            <person name="Krishnan S.P."/>
            <person name="Kruger A."/>
            <person name="Kummerfeld S.K."/>
            <person name="Kurochkin I.V."/>
            <person name="Lareau L.F."/>
            <person name="Lazarevic D."/>
            <person name="Lipovich L."/>
            <person name="Liu J."/>
            <person name="Liuni S."/>
            <person name="McWilliam S."/>
            <person name="Madan Babu M."/>
            <person name="Madera M."/>
            <person name="Marchionni L."/>
            <person name="Matsuda H."/>
            <person name="Matsuzawa S."/>
            <person name="Miki H."/>
            <person name="Mignone F."/>
            <person name="Miyake S."/>
            <person name="Morris K."/>
            <person name="Mottagui-Tabar S."/>
            <person name="Mulder N."/>
            <person name="Nakano N."/>
            <person name="Nakauchi H."/>
            <person name="Ng P."/>
            <person name="Nilsson R."/>
            <person name="Nishiguchi S."/>
            <person name="Nishikawa S."/>
            <person name="Nori F."/>
            <person name="Ohara O."/>
            <person name="Okazaki Y."/>
            <person name="Orlando V."/>
            <person name="Pang K.C."/>
            <person name="Pavan W.J."/>
            <person name="Pavesi G."/>
            <person name="Pesole G."/>
            <person name="Petrovsky N."/>
            <person name="Piazza S."/>
            <person name="Reed J."/>
            <person name="Reid J.F."/>
            <person name="Ring B.Z."/>
            <person name="Ringwald M."/>
            <person name="Rost B."/>
            <person name="Ruan Y."/>
            <person name="Salzberg S.L."/>
            <person name="Sandelin A."/>
            <person name="Schneider C."/>
            <person name="Schoenbach C."/>
            <person name="Sekiguchi K."/>
            <person name="Semple C.A."/>
            <person name="Seno S."/>
            <person name="Sessa L."/>
            <person name="Sheng Y."/>
            <person name="Shibata Y."/>
            <person name="Shimada H."/>
            <person name="Shimada K."/>
            <person name="Silva D."/>
            <person name="Sinclair B."/>
            <person name="Sperling S."/>
            <person name="Stupka E."/>
            <person name="Sugiura K."/>
            <person name="Sultana R."/>
            <person name="Takenaka Y."/>
            <person name="Taki K."/>
            <person name="Tammoja K."/>
            <person name="Tan S.L."/>
            <person name="Tang S."/>
            <person name="Taylor M.S."/>
            <person name="Tegner J."/>
            <person name="Teichmann S.A."/>
            <person name="Ueda H.R."/>
            <person name="van Nimwegen E."/>
            <person name="Verardo R."/>
            <person name="Wei C.L."/>
            <person name="Yagi K."/>
            <person name="Yamanishi H."/>
            <person name="Zabarovsky E."/>
            <person name="Zhu S."/>
            <person name="Zimmer A."/>
            <person name="Hide W."/>
            <person name="Bult C."/>
            <person name="Grimmond S.M."/>
            <person name="Teasdale R.D."/>
            <person name="Liu E.T."/>
            <person name="Brusic V."/>
            <person name="Quackenbush J."/>
            <person name="Wahlestedt C."/>
            <person name="Mattick J.S."/>
            <person name="Hume D.A."/>
            <person name="Kai C."/>
            <person name="Sasaki D."/>
            <person name="Tomaru Y."/>
            <person name="Fukuda S."/>
            <person name="Kanamori-Katayama M."/>
            <person name="Suzuki M."/>
            <person name="Aoki J."/>
            <person name="Arakawa T."/>
            <person name="Iida J."/>
            <person name="Imamura K."/>
            <person name="Itoh M."/>
            <person name="Kato T."/>
            <person name="Kawaji H."/>
            <person name="Kawagashira N."/>
            <person name="Kawashima T."/>
            <person name="Kojima M."/>
            <person name="Kondo S."/>
            <person name="Konno H."/>
            <person name="Nakano K."/>
            <person name="Ninomiya N."/>
            <person name="Nishio T."/>
            <person name="Okada M."/>
            <person name="Plessy C."/>
            <person name="Shibata K."/>
            <person name="Shiraki T."/>
            <person name="Suzuki S."/>
            <person name="Tagami M."/>
            <person name="Waki K."/>
            <person name="Watahiki A."/>
            <person name="Okamura-Oho Y."/>
            <person name="Suzuki H."/>
            <person name="Kawai J."/>
            <person name="Hayashizaki Y."/>
        </authorList>
    </citation>
    <scope>NUCLEOTIDE SEQUENCE [LARGE SCALE MRNA] (ISOFORMS 1; 2 AND 3)</scope>
    <source>
        <strain>C57BL/6J</strain>
        <tissue>Cerebellum</tissue>
        <tissue>Egg</tissue>
        <tissue>Eye</tissue>
        <tissue>Testis</tissue>
    </source>
</reference>
<reference key="2">
    <citation type="journal article" date="2009" name="PLoS Biol.">
        <title>Lineage-specific biology revealed by a finished genome assembly of the mouse.</title>
        <authorList>
            <person name="Church D.M."/>
            <person name="Goodstadt L."/>
            <person name="Hillier L.W."/>
            <person name="Zody M.C."/>
            <person name="Goldstein S."/>
            <person name="She X."/>
            <person name="Bult C.J."/>
            <person name="Agarwala R."/>
            <person name="Cherry J.L."/>
            <person name="DiCuccio M."/>
            <person name="Hlavina W."/>
            <person name="Kapustin Y."/>
            <person name="Meric P."/>
            <person name="Maglott D."/>
            <person name="Birtle Z."/>
            <person name="Marques A.C."/>
            <person name="Graves T."/>
            <person name="Zhou S."/>
            <person name="Teague B."/>
            <person name="Potamousis K."/>
            <person name="Churas C."/>
            <person name="Place M."/>
            <person name="Herschleb J."/>
            <person name="Runnheim R."/>
            <person name="Forrest D."/>
            <person name="Amos-Landgraf J."/>
            <person name="Schwartz D.C."/>
            <person name="Cheng Z."/>
            <person name="Lindblad-Toh K."/>
            <person name="Eichler E.E."/>
            <person name="Ponting C.P."/>
        </authorList>
    </citation>
    <scope>NUCLEOTIDE SEQUENCE [LARGE SCALE GENOMIC DNA]</scope>
    <source>
        <strain>C57BL/6J</strain>
    </source>
</reference>
<reference key="3">
    <citation type="journal article" date="2004" name="Genome Res.">
        <title>The status, quality, and expansion of the NIH full-length cDNA project: the Mammalian Gene Collection (MGC).</title>
        <authorList>
            <consortium name="The MGC Project Team"/>
        </authorList>
    </citation>
    <scope>NUCLEOTIDE SEQUENCE [LARGE SCALE MRNA] (ISOFORM 1)</scope>
    <source>
        <strain>C57BL/6J</strain>
        <tissue>Brain</tissue>
    </source>
</reference>
<reference key="4">
    <citation type="journal article" date="2010" name="Cell">
        <title>A tissue-specific atlas of mouse protein phosphorylation and expression.</title>
        <authorList>
            <person name="Huttlin E.L."/>
            <person name="Jedrychowski M.P."/>
            <person name="Elias J.E."/>
            <person name="Goswami T."/>
            <person name="Rad R."/>
            <person name="Beausoleil S.A."/>
            <person name="Villen J."/>
            <person name="Haas W."/>
            <person name="Sowa M.E."/>
            <person name="Gygi S.P."/>
        </authorList>
    </citation>
    <scope>IDENTIFICATION BY MASS SPECTROMETRY [LARGE SCALE ANALYSIS]</scope>
    <source>
        <tissue>Brain</tissue>
    </source>
</reference>
<accession>Q9D4C9</accession>
<accession>Q3UWV3</accession>
<accession>Q497H3</accession>
<accession>Q8BJE8</accession>
<accession>Q8BXX0</accession>
<keyword id="KW-0025">Alternative splicing</keyword>
<keyword id="KW-0968">Cytoplasmic vesicle</keyword>
<keyword id="KW-0967">Endosome</keyword>
<keyword id="KW-0333">Golgi apparatus</keyword>
<keyword id="KW-0446">Lipid-binding</keyword>
<keyword id="KW-0472">Membrane</keyword>
<keyword id="KW-1185">Reference proteome</keyword>
<comment type="function">
    <text evidence="1">Required for normal morphology of late endosomes and/or lysosomes in neurons. Binds phosphatidylinositol 3,5-bisphosphate (PtdIns(3,5)P2) (By similarity).</text>
</comment>
<comment type="subunit">
    <text evidence="1">Forms a complex with clathrin heavy chain and gamma-adaptin.</text>
</comment>
<comment type="subcellular location">
    <subcellularLocation>
        <location evidence="1">Golgi apparatus</location>
        <location evidence="1">trans-Golgi network membrane</location>
        <topology evidence="1">Peripheral membrane protein</topology>
    </subcellularLocation>
    <subcellularLocation>
        <location evidence="1">Early endosome membrane</location>
        <topology evidence="1">Peripheral membrane protein</topology>
    </subcellularLocation>
    <subcellularLocation>
        <location evidence="1">Cytoplasmic vesicle</location>
        <location evidence="1">Clathrin-coated vesicle</location>
    </subcellularLocation>
</comment>
<comment type="alternative products">
    <event type="alternative splicing"/>
    <isoform>
        <id>Q9D4C9-1</id>
        <name>1</name>
        <sequence type="displayed"/>
    </isoform>
    <isoform>
        <id>Q9D4C9-2</id>
        <name>2</name>
        <sequence type="described" ref="VSP_027331"/>
    </isoform>
    <isoform>
        <id>Q9D4C9-3</id>
        <name>3</name>
        <sequence type="described" ref="VSP_027330"/>
    </isoform>
</comment>
<comment type="domain">
    <text evidence="1">The CRAL-TRIO domain is required for targeting to the membrane and for binding PtdIns(3,5)P2.</text>
</comment>
<comment type="miscellaneous">
    <text evidence="1">Binding to PtdIns(3,5)P2 is not required for localization.</text>
</comment>
<comment type="sequence caution" evidence="5">
    <conflict type="erroneous initiation">
        <sequence resource="EMBL-CDS" id="BAE22811"/>
    </conflict>
</comment>
<feature type="chain" id="PRO_0000297656" description="Clavesin-1">
    <location>
        <begin position="1"/>
        <end position="354"/>
    </location>
</feature>
<feature type="domain" description="CRAL-TRIO" evidence="2">
    <location>
        <begin position="118"/>
        <end position="279"/>
    </location>
</feature>
<feature type="region of interest" description="Disordered" evidence="3">
    <location>
        <begin position="317"/>
        <end position="354"/>
    </location>
</feature>
<feature type="compositionally biased region" description="Basic and acidic residues" evidence="3">
    <location>
        <begin position="335"/>
        <end position="344"/>
    </location>
</feature>
<feature type="compositionally biased region" description="Polar residues" evidence="3">
    <location>
        <begin position="345"/>
        <end position="354"/>
    </location>
</feature>
<feature type="splice variant" id="VSP_027330" description="In isoform 3." evidence="4">
    <location>
        <begin position="1"/>
        <end position="279"/>
    </location>
</feature>
<feature type="splice variant" id="VSP_027331" description="In isoform 2." evidence="4">
    <location>
        <begin position="153"/>
        <end position="354"/>
    </location>
</feature>
<feature type="sequence conflict" description="In Ref. 1; BAE22811." evidence="5" ref="1">
    <original>H</original>
    <variation>Q</variation>
    <location>
        <position position="307"/>
    </location>
</feature>
<organism>
    <name type="scientific">Mus musculus</name>
    <name type="common">Mouse</name>
    <dbReference type="NCBI Taxonomy" id="10090"/>
    <lineage>
        <taxon>Eukaryota</taxon>
        <taxon>Metazoa</taxon>
        <taxon>Chordata</taxon>
        <taxon>Craniata</taxon>
        <taxon>Vertebrata</taxon>
        <taxon>Euteleostomi</taxon>
        <taxon>Mammalia</taxon>
        <taxon>Eutheria</taxon>
        <taxon>Euarchontoglires</taxon>
        <taxon>Glires</taxon>
        <taxon>Rodentia</taxon>
        <taxon>Myomorpha</taxon>
        <taxon>Muroidea</taxon>
        <taxon>Muridae</taxon>
        <taxon>Murinae</taxon>
        <taxon>Mus</taxon>
        <taxon>Mus</taxon>
    </lineage>
</organism>
<proteinExistence type="evidence at protein level"/>
<evidence type="ECO:0000250" key="1"/>
<evidence type="ECO:0000255" key="2">
    <source>
        <dbReference type="PROSITE-ProRule" id="PRU00056"/>
    </source>
</evidence>
<evidence type="ECO:0000256" key="3">
    <source>
        <dbReference type="SAM" id="MobiDB-lite"/>
    </source>
</evidence>
<evidence type="ECO:0000303" key="4">
    <source>
    </source>
</evidence>
<evidence type="ECO:0000305" key="5"/>
<dbReference type="EMBL" id="AK016622">
    <property type="protein sequence ID" value="BAB30342.1"/>
    <property type="molecule type" value="mRNA"/>
</dbReference>
<dbReference type="EMBL" id="AK043072">
    <property type="protein sequence ID" value="BAC31451.1"/>
    <property type="molecule type" value="mRNA"/>
</dbReference>
<dbReference type="EMBL" id="AK084350">
    <property type="protein sequence ID" value="BAC39166.1"/>
    <property type="molecule type" value="mRNA"/>
</dbReference>
<dbReference type="EMBL" id="AK136083">
    <property type="protein sequence ID" value="BAE22811.1"/>
    <property type="status" value="ALT_INIT"/>
    <property type="molecule type" value="mRNA"/>
</dbReference>
<dbReference type="EMBL" id="AL671970">
    <property type="status" value="NOT_ANNOTATED_CDS"/>
    <property type="molecule type" value="Genomic_DNA"/>
</dbReference>
<dbReference type="EMBL" id="AL844180">
    <property type="status" value="NOT_ANNOTATED_CDS"/>
    <property type="molecule type" value="Genomic_DNA"/>
</dbReference>
<dbReference type="EMBL" id="BC062923">
    <property type="protein sequence ID" value="AAH62923.1"/>
    <property type="molecule type" value="mRNA"/>
</dbReference>
<dbReference type="EMBL" id="BC100556">
    <property type="protein sequence ID" value="AAI00557.1"/>
    <property type="molecule type" value="mRNA"/>
</dbReference>
<dbReference type="CCDS" id="CCDS17957.1">
    <molecule id="Q9D4C9-1"/>
</dbReference>
<dbReference type="RefSeq" id="NP_001342112.1">
    <molecule id="Q9D4C9-1"/>
    <property type="nucleotide sequence ID" value="NM_001355183.1"/>
</dbReference>
<dbReference type="RefSeq" id="NP_083216.1">
    <molecule id="Q9D4C9-1"/>
    <property type="nucleotide sequence ID" value="NM_028940.2"/>
</dbReference>
<dbReference type="RefSeq" id="XP_011248427.1">
    <property type="nucleotide sequence ID" value="XM_011250125.2"/>
</dbReference>
<dbReference type="RefSeq" id="XP_030109711.1">
    <molecule id="Q9D4C9-1"/>
    <property type="nucleotide sequence ID" value="XM_030253851.2"/>
</dbReference>
<dbReference type="SMR" id="Q9D4C9"/>
<dbReference type="FunCoup" id="Q9D4C9">
    <property type="interactions" value="419"/>
</dbReference>
<dbReference type="STRING" id="10090.ENSMUSP00000035649"/>
<dbReference type="iPTMnet" id="Q9D4C9"/>
<dbReference type="PhosphoSitePlus" id="Q9D4C9"/>
<dbReference type="SwissPalm" id="Q9D4C9"/>
<dbReference type="PaxDb" id="10090-ENSMUSP00000035649"/>
<dbReference type="PeptideAtlas" id="Q9D4C9"/>
<dbReference type="ProteomicsDB" id="283863">
    <molecule id="Q9D4C9-1"/>
</dbReference>
<dbReference type="ProteomicsDB" id="283864">
    <molecule id="Q9D4C9-2"/>
</dbReference>
<dbReference type="ProteomicsDB" id="283865">
    <molecule id="Q9D4C9-3"/>
</dbReference>
<dbReference type="Antibodypedia" id="24702">
    <property type="antibodies" value="98 antibodies from 18 providers"/>
</dbReference>
<dbReference type="Ensembl" id="ENSMUST00000038841.14">
    <molecule id="Q9D4C9-1"/>
    <property type="protein sequence ID" value="ENSMUSP00000035649.8"/>
    <property type="gene ID" value="ENSMUSG00000041216.16"/>
</dbReference>
<dbReference type="Ensembl" id="ENSMUST00000108348.2">
    <molecule id="Q9D4C9-1"/>
    <property type="protein sequence ID" value="ENSMUSP00000103985.2"/>
    <property type="gene ID" value="ENSMUSG00000041216.16"/>
</dbReference>
<dbReference type="GeneID" id="74438"/>
<dbReference type="KEGG" id="mmu:74438"/>
<dbReference type="UCSC" id="uc008ryc.2">
    <molecule id="Q9D4C9-2"/>
    <property type="organism name" value="mouse"/>
</dbReference>
<dbReference type="UCSC" id="uc008rye.2">
    <molecule id="Q9D4C9-1"/>
    <property type="organism name" value="mouse"/>
</dbReference>
<dbReference type="AGR" id="MGI:1921688"/>
<dbReference type="CTD" id="157807"/>
<dbReference type="MGI" id="MGI:1921688">
    <property type="gene designation" value="Clvs1"/>
</dbReference>
<dbReference type="VEuPathDB" id="HostDB:ENSMUSG00000041216"/>
<dbReference type="eggNOG" id="KOG1471">
    <property type="taxonomic scope" value="Eukaryota"/>
</dbReference>
<dbReference type="GeneTree" id="ENSGT00940000159947"/>
<dbReference type="HOGENOM" id="CLU_046597_1_3_1"/>
<dbReference type="InParanoid" id="Q9D4C9"/>
<dbReference type="OMA" id="DSAKMTH"/>
<dbReference type="OrthoDB" id="7837562at2759"/>
<dbReference type="PhylomeDB" id="Q9D4C9"/>
<dbReference type="Reactome" id="R-MMU-432720">
    <property type="pathway name" value="Lysosome Vesicle Biogenesis"/>
</dbReference>
<dbReference type="BioGRID-ORCS" id="74438">
    <property type="hits" value="3 hits in 76 CRISPR screens"/>
</dbReference>
<dbReference type="ChiTaRS" id="Clvs1">
    <property type="organism name" value="mouse"/>
</dbReference>
<dbReference type="PRO" id="PR:Q9D4C9"/>
<dbReference type="Proteomes" id="UP000000589">
    <property type="component" value="Chromosome 4"/>
</dbReference>
<dbReference type="RNAct" id="Q9D4C9">
    <property type="molecule type" value="protein"/>
</dbReference>
<dbReference type="Bgee" id="ENSMUSG00000041216">
    <property type="expression patterns" value="Expressed in facial nucleus and 181 other cell types or tissues"/>
</dbReference>
<dbReference type="GO" id="GO:0030136">
    <property type="term" value="C:clathrin-coated vesicle"/>
    <property type="evidence" value="ECO:0000250"/>
    <property type="project" value="UniProtKB"/>
</dbReference>
<dbReference type="GO" id="GO:0031901">
    <property type="term" value="C:early endosome membrane"/>
    <property type="evidence" value="ECO:0007669"/>
    <property type="project" value="UniProtKB-SubCell"/>
</dbReference>
<dbReference type="GO" id="GO:0005768">
    <property type="term" value="C:endosome"/>
    <property type="evidence" value="ECO:0000250"/>
    <property type="project" value="UniProtKB"/>
</dbReference>
<dbReference type="GO" id="GO:0005802">
    <property type="term" value="C:trans-Golgi network"/>
    <property type="evidence" value="ECO:0000250"/>
    <property type="project" value="UniProtKB"/>
</dbReference>
<dbReference type="GO" id="GO:0080025">
    <property type="term" value="F:phosphatidylinositol-3,5-bisphosphate binding"/>
    <property type="evidence" value="ECO:0000250"/>
    <property type="project" value="UniProtKB"/>
</dbReference>
<dbReference type="GO" id="GO:0007040">
    <property type="term" value="P:lysosome organization"/>
    <property type="evidence" value="ECO:0000250"/>
    <property type="project" value="UniProtKB"/>
</dbReference>
<dbReference type="CDD" id="cd00170">
    <property type="entry name" value="SEC14"/>
    <property type="match status" value="1"/>
</dbReference>
<dbReference type="FunFam" id="1.10.8.20:FF:000001">
    <property type="entry name" value="Alpha-tocopherol transfer protein-like"/>
    <property type="match status" value="1"/>
</dbReference>
<dbReference type="FunFam" id="3.40.525.10:FF:000002">
    <property type="entry name" value="Alpha-tocopherol transfer protein-like"/>
    <property type="match status" value="1"/>
</dbReference>
<dbReference type="Gene3D" id="1.20.5.1200">
    <property type="entry name" value="Alpha-tocopherol transfer"/>
    <property type="match status" value="1"/>
</dbReference>
<dbReference type="Gene3D" id="3.40.525.10">
    <property type="entry name" value="CRAL-TRIO lipid binding domain"/>
    <property type="match status" value="1"/>
</dbReference>
<dbReference type="Gene3D" id="1.10.8.20">
    <property type="entry name" value="N-terminal domain of phosphatidylinositol transfer protein sec14p"/>
    <property type="match status" value="1"/>
</dbReference>
<dbReference type="InterPro" id="IPR001251">
    <property type="entry name" value="CRAL-TRIO_dom"/>
</dbReference>
<dbReference type="InterPro" id="IPR036865">
    <property type="entry name" value="CRAL-TRIO_dom_sf"/>
</dbReference>
<dbReference type="InterPro" id="IPR011074">
    <property type="entry name" value="CRAL/TRIO_N_dom"/>
</dbReference>
<dbReference type="InterPro" id="IPR036273">
    <property type="entry name" value="CRAL/TRIO_N_dom_sf"/>
</dbReference>
<dbReference type="PANTHER" id="PTHR10174">
    <property type="entry name" value="ALPHA-TOCOPHEROL TRANSFER PROTEIN-RELATED"/>
    <property type="match status" value="1"/>
</dbReference>
<dbReference type="PANTHER" id="PTHR10174:SF72">
    <property type="entry name" value="CLAVESIN-1"/>
    <property type="match status" value="1"/>
</dbReference>
<dbReference type="Pfam" id="PF00650">
    <property type="entry name" value="CRAL_TRIO"/>
    <property type="match status" value="1"/>
</dbReference>
<dbReference type="Pfam" id="PF03765">
    <property type="entry name" value="CRAL_TRIO_N"/>
    <property type="match status" value="1"/>
</dbReference>
<dbReference type="PRINTS" id="PR00180">
    <property type="entry name" value="CRETINALDHBP"/>
</dbReference>
<dbReference type="SMART" id="SM01100">
    <property type="entry name" value="CRAL_TRIO_N"/>
    <property type="match status" value="1"/>
</dbReference>
<dbReference type="SMART" id="SM00516">
    <property type="entry name" value="SEC14"/>
    <property type="match status" value="1"/>
</dbReference>
<dbReference type="SUPFAM" id="SSF52087">
    <property type="entry name" value="CRAL/TRIO domain"/>
    <property type="match status" value="1"/>
</dbReference>
<dbReference type="SUPFAM" id="SSF46938">
    <property type="entry name" value="CRAL/TRIO N-terminal domain"/>
    <property type="match status" value="1"/>
</dbReference>
<dbReference type="PROSITE" id="PS50191">
    <property type="entry name" value="CRAL_TRIO"/>
    <property type="match status" value="1"/>
</dbReference>
<name>CLVS1_MOUSE</name>